<organism>
    <name type="scientific">Leuconostoc citreum (strain KM20)</name>
    <dbReference type="NCBI Taxonomy" id="349519"/>
    <lineage>
        <taxon>Bacteria</taxon>
        <taxon>Bacillati</taxon>
        <taxon>Bacillota</taxon>
        <taxon>Bacilli</taxon>
        <taxon>Lactobacillales</taxon>
        <taxon>Lactobacillaceae</taxon>
        <taxon>Leuconostoc</taxon>
    </lineage>
</organism>
<name>RS19_LEUCK</name>
<sequence length="93" mass="10528">MARSLKKGPFADPHLLKKIEAQADSEKKSVIKTWSRRSTIFPSFIGFTIAVYDGRKHVPVFVQEDMVGHKLGEFVPTRTFKGHKADDKKTGKK</sequence>
<keyword id="KW-1185">Reference proteome</keyword>
<keyword id="KW-0687">Ribonucleoprotein</keyword>
<keyword id="KW-0689">Ribosomal protein</keyword>
<keyword id="KW-0694">RNA-binding</keyword>
<keyword id="KW-0699">rRNA-binding</keyword>
<accession>B1MW10</accession>
<protein>
    <recommendedName>
        <fullName evidence="1">Small ribosomal subunit protein uS19</fullName>
    </recommendedName>
    <alternativeName>
        <fullName evidence="2">30S ribosomal protein S19</fullName>
    </alternativeName>
</protein>
<feature type="chain" id="PRO_1000127998" description="Small ribosomal subunit protein uS19">
    <location>
        <begin position="1"/>
        <end position="93"/>
    </location>
</feature>
<evidence type="ECO:0000255" key="1">
    <source>
        <dbReference type="HAMAP-Rule" id="MF_00531"/>
    </source>
</evidence>
<evidence type="ECO:0000305" key="2"/>
<reference key="1">
    <citation type="journal article" date="2008" name="J. Bacteriol.">
        <title>Complete genome sequence of Leuconostoc citreum KM20.</title>
        <authorList>
            <person name="Kim J.F."/>
            <person name="Jeong H."/>
            <person name="Lee J.-S."/>
            <person name="Choi S.-H."/>
            <person name="Ha M."/>
            <person name="Hur C.-G."/>
            <person name="Kim J.-S."/>
            <person name="Lee S."/>
            <person name="Park H.-S."/>
            <person name="Park Y.-H."/>
            <person name="Oh T.K."/>
        </authorList>
    </citation>
    <scope>NUCLEOTIDE SEQUENCE [LARGE SCALE GENOMIC DNA]</scope>
    <source>
        <strain>KM20</strain>
    </source>
</reference>
<comment type="function">
    <text evidence="1">Protein S19 forms a complex with S13 that binds strongly to the 16S ribosomal RNA.</text>
</comment>
<comment type="similarity">
    <text evidence="1">Belongs to the universal ribosomal protein uS19 family.</text>
</comment>
<dbReference type="EMBL" id="DQ489736">
    <property type="protein sequence ID" value="ACA83414.1"/>
    <property type="molecule type" value="Genomic_DNA"/>
</dbReference>
<dbReference type="RefSeq" id="WP_004899458.1">
    <property type="nucleotide sequence ID" value="NC_010471.1"/>
</dbReference>
<dbReference type="SMR" id="B1MW10"/>
<dbReference type="STRING" id="349519.LCK_01591"/>
<dbReference type="GeneID" id="66531370"/>
<dbReference type="KEGG" id="lci:LCK_01591"/>
<dbReference type="eggNOG" id="COG0185">
    <property type="taxonomic scope" value="Bacteria"/>
</dbReference>
<dbReference type="HOGENOM" id="CLU_144911_0_1_9"/>
<dbReference type="OrthoDB" id="9797833at2"/>
<dbReference type="Proteomes" id="UP000002166">
    <property type="component" value="Chromosome"/>
</dbReference>
<dbReference type="GO" id="GO:0005737">
    <property type="term" value="C:cytoplasm"/>
    <property type="evidence" value="ECO:0007669"/>
    <property type="project" value="UniProtKB-ARBA"/>
</dbReference>
<dbReference type="GO" id="GO:0015935">
    <property type="term" value="C:small ribosomal subunit"/>
    <property type="evidence" value="ECO:0007669"/>
    <property type="project" value="InterPro"/>
</dbReference>
<dbReference type="GO" id="GO:0019843">
    <property type="term" value="F:rRNA binding"/>
    <property type="evidence" value="ECO:0007669"/>
    <property type="project" value="UniProtKB-UniRule"/>
</dbReference>
<dbReference type="GO" id="GO:0003735">
    <property type="term" value="F:structural constituent of ribosome"/>
    <property type="evidence" value="ECO:0007669"/>
    <property type="project" value="InterPro"/>
</dbReference>
<dbReference type="GO" id="GO:0000028">
    <property type="term" value="P:ribosomal small subunit assembly"/>
    <property type="evidence" value="ECO:0007669"/>
    <property type="project" value="TreeGrafter"/>
</dbReference>
<dbReference type="GO" id="GO:0006412">
    <property type="term" value="P:translation"/>
    <property type="evidence" value="ECO:0007669"/>
    <property type="project" value="UniProtKB-UniRule"/>
</dbReference>
<dbReference type="FunFam" id="3.30.860.10:FF:000001">
    <property type="entry name" value="30S ribosomal protein S19"/>
    <property type="match status" value="1"/>
</dbReference>
<dbReference type="Gene3D" id="3.30.860.10">
    <property type="entry name" value="30s Ribosomal Protein S19, Chain A"/>
    <property type="match status" value="1"/>
</dbReference>
<dbReference type="HAMAP" id="MF_00531">
    <property type="entry name" value="Ribosomal_uS19"/>
    <property type="match status" value="1"/>
</dbReference>
<dbReference type="InterPro" id="IPR002222">
    <property type="entry name" value="Ribosomal_uS19"/>
</dbReference>
<dbReference type="InterPro" id="IPR005732">
    <property type="entry name" value="Ribosomal_uS19_bac-type"/>
</dbReference>
<dbReference type="InterPro" id="IPR020934">
    <property type="entry name" value="Ribosomal_uS19_CS"/>
</dbReference>
<dbReference type="InterPro" id="IPR023575">
    <property type="entry name" value="Ribosomal_uS19_SF"/>
</dbReference>
<dbReference type="NCBIfam" id="TIGR01050">
    <property type="entry name" value="rpsS_bact"/>
    <property type="match status" value="1"/>
</dbReference>
<dbReference type="PANTHER" id="PTHR11880">
    <property type="entry name" value="RIBOSOMAL PROTEIN S19P FAMILY MEMBER"/>
    <property type="match status" value="1"/>
</dbReference>
<dbReference type="PANTHER" id="PTHR11880:SF8">
    <property type="entry name" value="SMALL RIBOSOMAL SUBUNIT PROTEIN US19M"/>
    <property type="match status" value="1"/>
</dbReference>
<dbReference type="Pfam" id="PF00203">
    <property type="entry name" value="Ribosomal_S19"/>
    <property type="match status" value="1"/>
</dbReference>
<dbReference type="PIRSF" id="PIRSF002144">
    <property type="entry name" value="Ribosomal_S19"/>
    <property type="match status" value="1"/>
</dbReference>
<dbReference type="PRINTS" id="PR00975">
    <property type="entry name" value="RIBOSOMALS19"/>
</dbReference>
<dbReference type="SUPFAM" id="SSF54570">
    <property type="entry name" value="Ribosomal protein S19"/>
    <property type="match status" value="1"/>
</dbReference>
<dbReference type="PROSITE" id="PS00323">
    <property type="entry name" value="RIBOSOMAL_S19"/>
    <property type="match status" value="1"/>
</dbReference>
<proteinExistence type="inferred from homology"/>
<gene>
    <name evidence="1" type="primary">rpsS</name>
    <name type="ordered locus">LCK_01591</name>
</gene>